<protein>
    <recommendedName>
        <fullName evidence="1">UDP-N-acetylglucosamine--N-acetylmuramyl-(pentapeptide) pyrophosphoryl-undecaprenol N-acetylglucosamine transferase</fullName>
        <ecNumber evidence="1">2.4.1.227</ecNumber>
    </recommendedName>
    <alternativeName>
        <fullName evidence="1">Undecaprenyl-PP-MurNAc-pentapeptide-UDPGlcNAc GlcNAc transferase</fullName>
    </alternativeName>
</protein>
<sequence>MNGDKSTLSVIVAGGGTAGHIEPALAVADAIKAIDDTAVVTALGTARGLETTLVPERGYPLELIPPVPLPRKPTLDLLRLPGRVRASVRRTREVLDATGADVVVGFGGYVALPAYLAAGPGLLRRRRRIPIVVHEANASAGIANKIGARRAARVLAAVAGSGVSARGRSDAEILGIPVRASITALDRAALRAEARAHFGLPADGPVLLVFGGSQGARSLNEAVSGAAESLAAAGVAVLHAHGPKNTLDVPATPGGPPYVAVPYLSRMDLAYSAADAVICRSGAMTVAEVSAVGLPAVYVPLPHGNGEQELNARPVVAAGGGMIVADGDLSAGFVAETVIPLLRDPAQLEDMGRRAAGAGHRSAATEVARIVLDVAALTRGTR</sequence>
<name>MURG_RHOJR</name>
<comment type="function">
    <text evidence="1">Cell wall formation. Catalyzes the transfer of a GlcNAc subunit on undecaprenyl-pyrophosphoryl-MurNAc-pentapeptide (lipid intermediate I) to form undecaprenyl-pyrophosphoryl-MurNAc-(pentapeptide)GlcNAc (lipid intermediate II).</text>
</comment>
<comment type="catalytic activity">
    <reaction evidence="1">
        <text>di-trans,octa-cis-undecaprenyl diphospho-N-acetyl-alpha-D-muramoyl-L-alanyl-D-glutamyl-meso-2,6-diaminopimeloyl-D-alanyl-D-alanine + UDP-N-acetyl-alpha-D-glucosamine = di-trans,octa-cis-undecaprenyl diphospho-[N-acetyl-alpha-D-glucosaminyl-(1-&gt;4)]-N-acetyl-alpha-D-muramoyl-L-alanyl-D-glutamyl-meso-2,6-diaminopimeloyl-D-alanyl-D-alanine + UDP + H(+)</text>
        <dbReference type="Rhea" id="RHEA:31227"/>
        <dbReference type="ChEBI" id="CHEBI:15378"/>
        <dbReference type="ChEBI" id="CHEBI:57705"/>
        <dbReference type="ChEBI" id="CHEBI:58223"/>
        <dbReference type="ChEBI" id="CHEBI:61387"/>
        <dbReference type="ChEBI" id="CHEBI:61388"/>
        <dbReference type="EC" id="2.4.1.227"/>
    </reaction>
</comment>
<comment type="pathway">
    <text evidence="1">Cell wall biogenesis; peptidoglycan biosynthesis.</text>
</comment>
<comment type="subcellular location">
    <subcellularLocation>
        <location evidence="1">Cell membrane</location>
        <topology evidence="1">Peripheral membrane protein</topology>
        <orientation evidence="1">Cytoplasmic side</orientation>
    </subcellularLocation>
</comment>
<comment type="similarity">
    <text evidence="1">Belongs to the glycosyltransferase 28 family. MurG subfamily.</text>
</comment>
<reference key="1">
    <citation type="journal article" date="2006" name="Proc. Natl. Acad. Sci. U.S.A.">
        <title>The complete genome of Rhodococcus sp. RHA1 provides insights into a catabolic powerhouse.</title>
        <authorList>
            <person name="McLeod M.P."/>
            <person name="Warren R.L."/>
            <person name="Hsiao W.W.L."/>
            <person name="Araki N."/>
            <person name="Myhre M."/>
            <person name="Fernandes C."/>
            <person name="Miyazawa D."/>
            <person name="Wong W."/>
            <person name="Lillquist A.L."/>
            <person name="Wang D."/>
            <person name="Dosanjh M."/>
            <person name="Hara H."/>
            <person name="Petrescu A."/>
            <person name="Morin R.D."/>
            <person name="Yang G."/>
            <person name="Stott J.M."/>
            <person name="Schein J.E."/>
            <person name="Shin H."/>
            <person name="Smailus D."/>
            <person name="Siddiqui A.S."/>
            <person name="Marra M.A."/>
            <person name="Jones S.J.M."/>
            <person name="Holt R."/>
            <person name="Brinkman F.S.L."/>
            <person name="Miyauchi K."/>
            <person name="Fukuda M."/>
            <person name="Davies J.E."/>
            <person name="Mohn W.W."/>
            <person name="Eltis L.D."/>
        </authorList>
    </citation>
    <scope>NUCLEOTIDE SEQUENCE [LARGE SCALE GENOMIC DNA]</scope>
    <source>
        <strain>RHA1</strain>
    </source>
</reference>
<organism>
    <name type="scientific">Rhodococcus jostii (strain RHA1)</name>
    <dbReference type="NCBI Taxonomy" id="101510"/>
    <lineage>
        <taxon>Bacteria</taxon>
        <taxon>Bacillati</taxon>
        <taxon>Actinomycetota</taxon>
        <taxon>Actinomycetes</taxon>
        <taxon>Mycobacteriales</taxon>
        <taxon>Nocardiaceae</taxon>
        <taxon>Rhodococcus</taxon>
    </lineage>
</organism>
<accession>Q0SHS1</accession>
<evidence type="ECO:0000255" key="1">
    <source>
        <dbReference type="HAMAP-Rule" id="MF_00033"/>
    </source>
</evidence>
<dbReference type="EC" id="2.4.1.227" evidence="1"/>
<dbReference type="EMBL" id="CP000431">
    <property type="protein sequence ID" value="ABG92915.1"/>
    <property type="molecule type" value="Genomic_DNA"/>
</dbReference>
<dbReference type="RefSeq" id="WP_011594223.1">
    <property type="nucleotide sequence ID" value="NC_008268.1"/>
</dbReference>
<dbReference type="SMR" id="Q0SHS1"/>
<dbReference type="CAZy" id="GT28">
    <property type="family name" value="Glycosyltransferase Family 28"/>
</dbReference>
<dbReference type="KEGG" id="rha:RHA1_ro01088"/>
<dbReference type="PATRIC" id="fig|101510.16.peg.1112"/>
<dbReference type="eggNOG" id="COG0707">
    <property type="taxonomic scope" value="Bacteria"/>
</dbReference>
<dbReference type="HOGENOM" id="CLU_037404_1_0_11"/>
<dbReference type="OrthoDB" id="9808936at2"/>
<dbReference type="UniPathway" id="UPA00219"/>
<dbReference type="Proteomes" id="UP000008710">
    <property type="component" value="Chromosome"/>
</dbReference>
<dbReference type="GO" id="GO:0005886">
    <property type="term" value="C:plasma membrane"/>
    <property type="evidence" value="ECO:0007669"/>
    <property type="project" value="UniProtKB-SubCell"/>
</dbReference>
<dbReference type="GO" id="GO:0051991">
    <property type="term" value="F:UDP-N-acetyl-D-glucosamine:N-acetylmuramoyl-L-alanyl-D-glutamyl-meso-2,6-diaminopimelyl-D-alanyl-D-alanine-diphosphoundecaprenol 4-beta-N-acetylglucosaminlytransferase activity"/>
    <property type="evidence" value="ECO:0007669"/>
    <property type="project" value="RHEA"/>
</dbReference>
<dbReference type="GO" id="GO:0050511">
    <property type="term" value="F:undecaprenyldiphospho-muramoylpentapeptide beta-N-acetylglucosaminyltransferase activity"/>
    <property type="evidence" value="ECO:0007669"/>
    <property type="project" value="UniProtKB-UniRule"/>
</dbReference>
<dbReference type="GO" id="GO:0005975">
    <property type="term" value="P:carbohydrate metabolic process"/>
    <property type="evidence" value="ECO:0007669"/>
    <property type="project" value="InterPro"/>
</dbReference>
<dbReference type="GO" id="GO:0051301">
    <property type="term" value="P:cell division"/>
    <property type="evidence" value="ECO:0007669"/>
    <property type="project" value="UniProtKB-KW"/>
</dbReference>
<dbReference type="GO" id="GO:0071555">
    <property type="term" value="P:cell wall organization"/>
    <property type="evidence" value="ECO:0007669"/>
    <property type="project" value="UniProtKB-KW"/>
</dbReference>
<dbReference type="GO" id="GO:0030259">
    <property type="term" value="P:lipid glycosylation"/>
    <property type="evidence" value="ECO:0007669"/>
    <property type="project" value="UniProtKB-UniRule"/>
</dbReference>
<dbReference type="GO" id="GO:0009252">
    <property type="term" value="P:peptidoglycan biosynthetic process"/>
    <property type="evidence" value="ECO:0007669"/>
    <property type="project" value="UniProtKB-UniRule"/>
</dbReference>
<dbReference type="GO" id="GO:0008360">
    <property type="term" value="P:regulation of cell shape"/>
    <property type="evidence" value="ECO:0007669"/>
    <property type="project" value="UniProtKB-KW"/>
</dbReference>
<dbReference type="CDD" id="cd03785">
    <property type="entry name" value="GT28_MurG"/>
    <property type="match status" value="1"/>
</dbReference>
<dbReference type="Gene3D" id="3.40.50.2000">
    <property type="entry name" value="Glycogen Phosphorylase B"/>
    <property type="match status" value="2"/>
</dbReference>
<dbReference type="HAMAP" id="MF_00033">
    <property type="entry name" value="MurG"/>
    <property type="match status" value="1"/>
</dbReference>
<dbReference type="InterPro" id="IPR006009">
    <property type="entry name" value="GlcNAc_MurG"/>
</dbReference>
<dbReference type="InterPro" id="IPR007235">
    <property type="entry name" value="Glyco_trans_28_C"/>
</dbReference>
<dbReference type="InterPro" id="IPR004276">
    <property type="entry name" value="GlycoTrans_28_N"/>
</dbReference>
<dbReference type="NCBIfam" id="TIGR01133">
    <property type="entry name" value="murG"/>
    <property type="match status" value="1"/>
</dbReference>
<dbReference type="PANTHER" id="PTHR21015:SF22">
    <property type="entry name" value="GLYCOSYLTRANSFERASE"/>
    <property type="match status" value="1"/>
</dbReference>
<dbReference type="PANTHER" id="PTHR21015">
    <property type="entry name" value="UDP-N-ACETYLGLUCOSAMINE--N-ACETYLMURAMYL-(PENTAPEPTIDE) PYROPHOSPHORYL-UNDECAPRENOL N-ACETYLGLUCOSAMINE TRANSFERASE 1"/>
    <property type="match status" value="1"/>
</dbReference>
<dbReference type="Pfam" id="PF04101">
    <property type="entry name" value="Glyco_tran_28_C"/>
    <property type="match status" value="1"/>
</dbReference>
<dbReference type="Pfam" id="PF03033">
    <property type="entry name" value="Glyco_transf_28"/>
    <property type="match status" value="1"/>
</dbReference>
<dbReference type="SUPFAM" id="SSF53756">
    <property type="entry name" value="UDP-Glycosyltransferase/glycogen phosphorylase"/>
    <property type="match status" value="1"/>
</dbReference>
<feature type="chain" id="PRO_0000315150" description="UDP-N-acetylglucosamine--N-acetylmuramyl-(pentapeptide) pyrophosphoryl-undecaprenol N-acetylglucosamine transferase">
    <location>
        <begin position="1"/>
        <end position="382"/>
    </location>
</feature>
<feature type="binding site" evidence="1">
    <location>
        <begin position="17"/>
        <end position="19"/>
    </location>
    <ligand>
        <name>UDP-N-acetyl-alpha-D-glucosamine</name>
        <dbReference type="ChEBI" id="CHEBI:57705"/>
    </ligand>
</feature>
<feature type="binding site" evidence="1">
    <location>
        <position position="137"/>
    </location>
    <ligand>
        <name>UDP-N-acetyl-alpha-D-glucosamine</name>
        <dbReference type="ChEBI" id="CHEBI:57705"/>
    </ligand>
</feature>
<feature type="binding site" evidence="1">
    <location>
        <position position="179"/>
    </location>
    <ligand>
        <name>UDP-N-acetyl-alpha-D-glucosamine</name>
        <dbReference type="ChEBI" id="CHEBI:57705"/>
    </ligand>
</feature>
<feature type="binding site" evidence="1">
    <location>
        <position position="213"/>
    </location>
    <ligand>
        <name>UDP-N-acetyl-alpha-D-glucosamine</name>
        <dbReference type="ChEBI" id="CHEBI:57705"/>
    </ligand>
</feature>
<feature type="binding site" evidence="1">
    <location>
        <position position="308"/>
    </location>
    <ligand>
        <name>UDP-N-acetyl-alpha-D-glucosamine</name>
        <dbReference type="ChEBI" id="CHEBI:57705"/>
    </ligand>
</feature>
<keyword id="KW-0131">Cell cycle</keyword>
<keyword id="KW-0132">Cell division</keyword>
<keyword id="KW-1003">Cell membrane</keyword>
<keyword id="KW-0133">Cell shape</keyword>
<keyword id="KW-0961">Cell wall biogenesis/degradation</keyword>
<keyword id="KW-0328">Glycosyltransferase</keyword>
<keyword id="KW-0472">Membrane</keyword>
<keyword id="KW-0573">Peptidoglycan synthesis</keyword>
<keyword id="KW-0808">Transferase</keyword>
<gene>
    <name evidence="1" type="primary">murG</name>
    <name type="ordered locus">RHA1_ro01088</name>
</gene>
<proteinExistence type="inferred from homology"/>